<proteinExistence type="inferred from homology"/>
<keyword id="KW-0030">Aminoacyl-tRNA synthetase</keyword>
<keyword id="KW-0067">ATP-binding</keyword>
<keyword id="KW-0963">Cytoplasm</keyword>
<keyword id="KW-0436">Ligase</keyword>
<keyword id="KW-0547">Nucleotide-binding</keyword>
<keyword id="KW-0648">Protein biosynthesis</keyword>
<dbReference type="EC" id="6.1.1.11" evidence="1"/>
<dbReference type="EMBL" id="FM204884">
    <property type="protein sequence ID" value="CAX00264.1"/>
    <property type="molecule type" value="Genomic_DNA"/>
</dbReference>
<dbReference type="SMR" id="C0ME07"/>
<dbReference type="KEGG" id="seq:SZO_15630"/>
<dbReference type="eggNOG" id="COG0172">
    <property type="taxonomic scope" value="Bacteria"/>
</dbReference>
<dbReference type="HOGENOM" id="CLU_023797_1_1_9"/>
<dbReference type="UniPathway" id="UPA00906">
    <property type="reaction ID" value="UER00895"/>
</dbReference>
<dbReference type="Proteomes" id="UP000001368">
    <property type="component" value="Chromosome"/>
</dbReference>
<dbReference type="GO" id="GO:0005737">
    <property type="term" value="C:cytoplasm"/>
    <property type="evidence" value="ECO:0007669"/>
    <property type="project" value="UniProtKB-SubCell"/>
</dbReference>
<dbReference type="GO" id="GO:0005524">
    <property type="term" value="F:ATP binding"/>
    <property type="evidence" value="ECO:0007669"/>
    <property type="project" value="UniProtKB-UniRule"/>
</dbReference>
<dbReference type="GO" id="GO:0140096">
    <property type="term" value="F:catalytic activity, acting on a protein"/>
    <property type="evidence" value="ECO:0007669"/>
    <property type="project" value="UniProtKB-ARBA"/>
</dbReference>
<dbReference type="GO" id="GO:0004828">
    <property type="term" value="F:serine-tRNA ligase activity"/>
    <property type="evidence" value="ECO:0007669"/>
    <property type="project" value="UniProtKB-UniRule"/>
</dbReference>
<dbReference type="GO" id="GO:0016740">
    <property type="term" value="F:transferase activity"/>
    <property type="evidence" value="ECO:0007669"/>
    <property type="project" value="UniProtKB-ARBA"/>
</dbReference>
<dbReference type="GO" id="GO:0016260">
    <property type="term" value="P:selenocysteine biosynthetic process"/>
    <property type="evidence" value="ECO:0007669"/>
    <property type="project" value="UniProtKB-UniRule"/>
</dbReference>
<dbReference type="GO" id="GO:0006434">
    <property type="term" value="P:seryl-tRNA aminoacylation"/>
    <property type="evidence" value="ECO:0007669"/>
    <property type="project" value="UniProtKB-UniRule"/>
</dbReference>
<dbReference type="CDD" id="cd00770">
    <property type="entry name" value="SerRS_core"/>
    <property type="match status" value="1"/>
</dbReference>
<dbReference type="Gene3D" id="3.30.930.10">
    <property type="entry name" value="Bira Bifunctional Protein, Domain 2"/>
    <property type="match status" value="1"/>
</dbReference>
<dbReference type="Gene3D" id="1.10.287.40">
    <property type="entry name" value="Serine-tRNA synthetase, tRNA binding domain"/>
    <property type="match status" value="1"/>
</dbReference>
<dbReference type="HAMAP" id="MF_00176">
    <property type="entry name" value="Ser_tRNA_synth_type1"/>
    <property type="match status" value="1"/>
</dbReference>
<dbReference type="InterPro" id="IPR002314">
    <property type="entry name" value="aa-tRNA-synt_IIb"/>
</dbReference>
<dbReference type="InterPro" id="IPR006195">
    <property type="entry name" value="aa-tRNA-synth_II"/>
</dbReference>
<dbReference type="InterPro" id="IPR045864">
    <property type="entry name" value="aa-tRNA-synth_II/BPL/LPL"/>
</dbReference>
<dbReference type="InterPro" id="IPR002317">
    <property type="entry name" value="Ser-tRNA-ligase_type_1"/>
</dbReference>
<dbReference type="InterPro" id="IPR015866">
    <property type="entry name" value="Ser-tRNA-synth_1_N"/>
</dbReference>
<dbReference type="InterPro" id="IPR042103">
    <property type="entry name" value="SerRS_1_N_sf"/>
</dbReference>
<dbReference type="InterPro" id="IPR033729">
    <property type="entry name" value="SerRS_core"/>
</dbReference>
<dbReference type="InterPro" id="IPR010978">
    <property type="entry name" value="tRNA-bd_arm"/>
</dbReference>
<dbReference type="NCBIfam" id="TIGR00414">
    <property type="entry name" value="serS"/>
    <property type="match status" value="1"/>
</dbReference>
<dbReference type="PANTHER" id="PTHR43697:SF1">
    <property type="entry name" value="SERINE--TRNA LIGASE"/>
    <property type="match status" value="1"/>
</dbReference>
<dbReference type="PANTHER" id="PTHR43697">
    <property type="entry name" value="SERYL-TRNA SYNTHETASE"/>
    <property type="match status" value="1"/>
</dbReference>
<dbReference type="Pfam" id="PF02403">
    <property type="entry name" value="Seryl_tRNA_N"/>
    <property type="match status" value="1"/>
</dbReference>
<dbReference type="Pfam" id="PF00587">
    <property type="entry name" value="tRNA-synt_2b"/>
    <property type="match status" value="1"/>
</dbReference>
<dbReference type="PIRSF" id="PIRSF001529">
    <property type="entry name" value="Ser-tRNA-synth_IIa"/>
    <property type="match status" value="1"/>
</dbReference>
<dbReference type="PRINTS" id="PR00981">
    <property type="entry name" value="TRNASYNTHSER"/>
</dbReference>
<dbReference type="SUPFAM" id="SSF55681">
    <property type="entry name" value="Class II aaRS and biotin synthetases"/>
    <property type="match status" value="1"/>
</dbReference>
<dbReference type="SUPFAM" id="SSF46589">
    <property type="entry name" value="tRNA-binding arm"/>
    <property type="match status" value="1"/>
</dbReference>
<dbReference type="PROSITE" id="PS50862">
    <property type="entry name" value="AA_TRNA_LIGASE_II"/>
    <property type="match status" value="1"/>
</dbReference>
<accession>C0ME07</accession>
<organism>
    <name type="scientific">Streptococcus equi subsp. zooepidemicus (strain H70)</name>
    <dbReference type="NCBI Taxonomy" id="553483"/>
    <lineage>
        <taxon>Bacteria</taxon>
        <taxon>Bacillati</taxon>
        <taxon>Bacillota</taxon>
        <taxon>Bacilli</taxon>
        <taxon>Lactobacillales</taxon>
        <taxon>Streptococcaceae</taxon>
        <taxon>Streptococcus</taxon>
    </lineage>
</organism>
<name>SYS_STRS7</name>
<sequence>MLDLKRIRTNFDAVAAKLKTRGVSEDTLTTLKALDEQRRALLVQTEELKAQRNIASAAIAQAKRQKKDASQQIADMQQLAANIKAIDAKLADIDQEITSIITVLPNTPHDSVPIGADEEDNVEIRRWGKPRQFDFDIKAHWDLGEALDILDWERGAKVTGARFLFYKNLGARLERALYNFMLDEHLKEGYQEIIPPYMVNHDSMFGTGQYPKFKEDTFELDGTSFVLIPTAEVPLTNYYRGDIIDGKELPIYFTAMSPSFRSEAGSAGRDTRGLIRLHQFHKVEMVKFAKPETSYEELEKMTANAENILQKLELPYRVLALCTGDMGFSAAKTYDLEVWIPAQNTYREISSCSNTEDFQARRAQIRYRDEADGKVKLLHTLNGSGLAVGRTVAAILENYQNEDGSVTIPEVLRPYMGGLELIKPR</sequence>
<protein>
    <recommendedName>
        <fullName evidence="1">Serine--tRNA ligase</fullName>
        <ecNumber evidence="1">6.1.1.11</ecNumber>
    </recommendedName>
    <alternativeName>
        <fullName evidence="1">Seryl-tRNA synthetase</fullName>
        <shortName evidence="1">SerRS</shortName>
    </alternativeName>
    <alternativeName>
        <fullName evidence="1">Seryl-tRNA(Ser/Sec) synthetase</fullName>
    </alternativeName>
</protein>
<feature type="chain" id="PRO_1000203768" description="Serine--tRNA ligase">
    <location>
        <begin position="1"/>
        <end position="425"/>
    </location>
</feature>
<feature type="binding site" evidence="1">
    <location>
        <begin position="230"/>
        <end position="232"/>
    </location>
    <ligand>
        <name>L-serine</name>
        <dbReference type="ChEBI" id="CHEBI:33384"/>
    </ligand>
</feature>
<feature type="binding site" evidence="1">
    <location>
        <begin position="261"/>
        <end position="263"/>
    </location>
    <ligand>
        <name>ATP</name>
        <dbReference type="ChEBI" id="CHEBI:30616"/>
    </ligand>
</feature>
<feature type="binding site" evidence="1">
    <location>
        <position position="284"/>
    </location>
    <ligand>
        <name>L-serine</name>
        <dbReference type="ChEBI" id="CHEBI:33384"/>
    </ligand>
</feature>
<feature type="binding site" evidence="1">
    <location>
        <begin position="348"/>
        <end position="351"/>
    </location>
    <ligand>
        <name>ATP</name>
        <dbReference type="ChEBI" id="CHEBI:30616"/>
    </ligand>
</feature>
<feature type="binding site" evidence="1">
    <location>
        <position position="384"/>
    </location>
    <ligand>
        <name>L-serine</name>
        <dbReference type="ChEBI" id="CHEBI:33384"/>
    </ligand>
</feature>
<gene>
    <name evidence="1" type="primary">serS</name>
    <name type="ordered locus">SZO_15630</name>
</gene>
<evidence type="ECO:0000255" key="1">
    <source>
        <dbReference type="HAMAP-Rule" id="MF_00176"/>
    </source>
</evidence>
<reference key="1">
    <citation type="journal article" date="2009" name="PLoS Pathog.">
        <title>Genomic evidence for the evolution of Streptococcus equi: host restriction, increased virulence, and genetic exchange with human pathogens.</title>
        <authorList>
            <person name="Holden M.T.G."/>
            <person name="Heather Z."/>
            <person name="Paillot R."/>
            <person name="Steward K.F."/>
            <person name="Webb K."/>
            <person name="Ainslie F."/>
            <person name="Jourdan T."/>
            <person name="Bason N.C."/>
            <person name="Holroyd N.E."/>
            <person name="Mungall K."/>
            <person name="Quail M.A."/>
            <person name="Sanders M."/>
            <person name="Simmonds M."/>
            <person name="Willey D."/>
            <person name="Brooks K."/>
            <person name="Aanensen D.M."/>
            <person name="Spratt B.G."/>
            <person name="Jolley K.A."/>
            <person name="Maiden M.C.J."/>
            <person name="Kehoe M."/>
            <person name="Chanter N."/>
            <person name="Bentley S.D."/>
            <person name="Robinson C."/>
            <person name="Maskell D.J."/>
            <person name="Parkhill J."/>
            <person name="Waller A.S."/>
        </authorList>
    </citation>
    <scope>NUCLEOTIDE SEQUENCE [LARGE SCALE GENOMIC DNA]</scope>
    <source>
        <strain>H70</strain>
    </source>
</reference>
<comment type="function">
    <text evidence="1">Catalyzes the attachment of serine to tRNA(Ser). Is also able to aminoacylate tRNA(Sec) with serine, to form the misacylated tRNA L-seryl-tRNA(Sec), which will be further converted into selenocysteinyl-tRNA(Sec).</text>
</comment>
<comment type="catalytic activity">
    <reaction evidence="1">
        <text>tRNA(Ser) + L-serine + ATP = L-seryl-tRNA(Ser) + AMP + diphosphate + H(+)</text>
        <dbReference type="Rhea" id="RHEA:12292"/>
        <dbReference type="Rhea" id="RHEA-COMP:9669"/>
        <dbReference type="Rhea" id="RHEA-COMP:9703"/>
        <dbReference type="ChEBI" id="CHEBI:15378"/>
        <dbReference type="ChEBI" id="CHEBI:30616"/>
        <dbReference type="ChEBI" id="CHEBI:33019"/>
        <dbReference type="ChEBI" id="CHEBI:33384"/>
        <dbReference type="ChEBI" id="CHEBI:78442"/>
        <dbReference type="ChEBI" id="CHEBI:78533"/>
        <dbReference type="ChEBI" id="CHEBI:456215"/>
        <dbReference type="EC" id="6.1.1.11"/>
    </reaction>
</comment>
<comment type="catalytic activity">
    <reaction evidence="1">
        <text>tRNA(Sec) + L-serine + ATP = L-seryl-tRNA(Sec) + AMP + diphosphate + H(+)</text>
        <dbReference type="Rhea" id="RHEA:42580"/>
        <dbReference type="Rhea" id="RHEA-COMP:9742"/>
        <dbReference type="Rhea" id="RHEA-COMP:10128"/>
        <dbReference type="ChEBI" id="CHEBI:15378"/>
        <dbReference type="ChEBI" id="CHEBI:30616"/>
        <dbReference type="ChEBI" id="CHEBI:33019"/>
        <dbReference type="ChEBI" id="CHEBI:33384"/>
        <dbReference type="ChEBI" id="CHEBI:78442"/>
        <dbReference type="ChEBI" id="CHEBI:78533"/>
        <dbReference type="ChEBI" id="CHEBI:456215"/>
        <dbReference type="EC" id="6.1.1.11"/>
    </reaction>
</comment>
<comment type="pathway">
    <text evidence="1">Aminoacyl-tRNA biosynthesis; selenocysteinyl-tRNA(Sec) biosynthesis; L-seryl-tRNA(Sec) from L-serine and tRNA(Sec): step 1/1.</text>
</comment>
<comment type="subunit">
    <text evidence="1">Homodimer. The tRNA molecule binds across the dimer.</text>
</comment>
<comment type="subcellular location">
    <subcellularLocation>
        <location evidence="1">Cytoplasm</location>
    </subcellularLocation>
</comment>
<comment type="domain">
    <text evidence="1">Consists of two distinct domains, a catalytic core and a N-terminal extension that is involved in tRNA binding.</text>
</comment>
<comment type="similarity">
    <text evidence="1">Belongs to the class-II aminoacyl-tRNA synthetase family. Type-1 seryl-tRNA synthetase subfamily.</text>
</comment>